<keyword id="KW-0030">Aminoacyl-tRNA synthetase</keyword>
<keyword id="KW-0067">ATP-binding</keyword>
<keyword id="KW-0963">Cytoplasm</keyword>
<keyword id="KW-0436">Ligase</keyword>
<keyword id="KW-0547">Nucleotide-binding</keyword>
<keyword id="KW-0648">Protein biosynthesis</keyword>
<sequence length="525" mass="60357">MSEIWEDAIKSNAWPFVEAKKILDSLNGKVPEKNYVLFETGYGPSGLPHIGTFGENARMVMVQKAFEQLSDISTKLICFSDDMDGLRKVPSNIPNPEMVAGYMDMPLTSIPDPFGECESYGHYMNAKLRSFLDKFGFEYEFYSSTNCYKAGMFDEMLIRVLEKYDEIMELMLPTFREERKATYSPFMPICPKTGKVLQVPIEKWDAKAGTVRYKDEAGNYVEVPVTGGHCKLQWKPDFGMRWAALKVDYEMYGKDHLANARLYSEICRILGGKPPVQLCYELFLDENGEKISKSKGNSISVDDWLKYAPVESMALFMYQNPTRAKRLFFDVIPKNVDEYITFNQKYHLEEDRAKRFANPVYHIHHGNVPKIETFGITYALLLNLTSVCNPSDKSVLWGFISKYEPKATPKTSPYLDHLAEFAIRYYNDFIKAYKSYLAPSEKHKVILQDILDMLSSISDQTEAEAIQKAIYDIGMKAGYENLRDYFKDLYQILLGQSEGPRLGTFIKLYGIKETMKLVEGKLYTR</sequence>
<reference key="1">
    <citation type="journal article" date="2005" name="PLoS Biol.">
        <title>The genome sequence of Rickettsia felis identifies the first putative conjugative plasmid in an obligate intracellular parasite.</title>
        <authorList>
            <person name="Ogata H."/>
            <person name="Renesto P."/>
            <person name="Audic S."/>
            <person name="Robert C."/>
            <person name="Blanc G."/>
            <person name="Fournier P.-E."/>
            <person name="Parinello H."/>
            <person name="Claverie J.-M."/>
            <person name="Raoult D."/>
        </authorList>
    </citation>
    <scope>NUCLEOTIDE SEQUENCE [LARGE SCALE GENOMIC DNA]</scope>
    <source>
        <strain>ATCC VR-1525 / URRWXCal2</strain>
    </source>
</reference>
<dbReference type="EC" id="6.1.1.6" evidence="1"/>
<dbReference type="EMBL" id="CP000053">
    <property type="protein sequence ID" value="AAY61433.1"/>
    <property type="molecule type" value="Genomic_DNA"/>
</dbReference>
<dbReference type="SMR" id="Q4ULZ0"/>
<dbReference type="STRING" id="315456.RF_0582"/>
<dbReference type="KEGG" id="rfe:RF_0582"/>
<dbReference type="eggNOG" id="COG1384">
    <property type="taxonomic scope" value="Bacteria"/>
</dbReference>
<dbReference type="HOGENOM" id="CLU_025562_2_0_5"/>
<dbReference type="OrthoDB" id="9803151at2"/>
<dbReference type="Proteomes" id="UP000008548">
    <property type="component" value="Chromosome"/>
</dbReference>
<dbReference type="GO" id="GO:0005737">
    <property type="term" value="C:cytoplasm"/>
    <property type="evidence" value="ECO:0007669"/>
    <property type="project" value="UniProtKB-SubCell"/>
</dbReference>
<dbReference type="GO" id="GO:0005524">
    <property type="term" value="F:ATP binding"/>
    <property type="evidence" value="ECO:0007669"/>
    <property type="project" value="UniProtKB-UniRule"/>
</dbReference>
<dbReference type="GO" id="GO:0004824">
    <property type="term" value="F:lysine-tRNA ligase activity"/>
    <property type="evidence" value="ECO:0007669"/>
    <property type="project" value="UniProtKB-UniRule"/>
</dbReference>
<dbReference type="GO" id="GO:0000049">
    <property type="term" value="F:tRNA binding"/>
    <property type="evidence" value="ECO:0007669"/>
    <property type="project" value="InterPro"/>
</dbReference>
<dbReference type="GO" id="GO:0006430">
    <property type="term" value="P:lysyl-tRNA aminoacylation"/>
    <property type="evidence" value="ECO:0007669"/>
    <property type="project" value="UniProtKB-UniRule"/>
</dbReference>
<dbReference type="Gene3D" id="1.10.10.350">
    <property type="match status" value="1"/>
</dbReference>
<dbReference type="Gene3D" id="3.40.50.620">
    <property type="entry name" value="HUPs"/>
    <property type="match status" value="2"/>
</dbReference>
<dbReference type="HAMAP" id="MF_00177">
    <property type="entry name" value="Lys_tRNA_synth_class1"/>
    <property type="match status" value="1"/>
</dbReference>
<dbReference type="InterPro" id="IPR020751">
    <property type="entry name" value="aa-tRNA-synth_I_codon-bd_sub2"/>
</dbReference>
<dbReference type="InterPro" id="IPR001412">
    <property type="entry name" value="aa-tRNA-synth_I_CS"/>
</dbReference>
<dbReference type="InterPro" id="IPR008925">
    <property type="entry name" value="aa_tRNA-synth_I_cd-bd_sf"/>
</dbReference>
<dbReference type="InterPro" id="IPR002904">
    <property type="entry name" value="Lys-tRNA-ligase"/>
</dbReference>
<dbReference type="InterPro" id="IPR014729">
    <property type="entry name" value="Rossmann-like_a/b/a_fold"/>
</dbReference>
<dbReference type="NCBIfam" id="TIGR00467">
    <property type="entry name" value="lysS_arch"/>
    <property type="match status" value="1"/>
</dbReference>
<dbReference type="NCBIfam" id="NF001968">
    <property type="entry name" value="PRK00750.1-2"/>
    <property type="match status" value="1"/>
</dbReference>
<dbReference type="PANTHER" id="PTHR37940">
    <property type="entry name" value="LYSINE--TRNA LIGASE"/>
    <property type="match status" value="1"/>
</dbReference>
<dbReference type="PANTHER" id="PTHR37940:SF1">
    <property type="entry name" value="LYSINE--TRNA LIGASE"/>
    <property type="match status" value="1"/>
</dbReference>
<dbReference type="Pfam" id="PF01921">
    <property type="entry name" value="tRNA-synt_1f"/>
    <property type="match status" value="1"/>
</dbReference>
<dbReference type="SUPFAM" id="SSF48163">
    <property type="entry name" value="An anticodon-binding domain of class I aminoacyl-tRNA synthetases"/>
    <property type="match status" value="1"/>
</dbReference>
<dbReference type="SUPFAM" id="SSF52374">
    <property type="entry name" value="Nucleotidylyl transferase"/>
    <property type="match status" value="1"/>
</dbReference>
<dbReference type="PROSITE" id="PS00178">
    <property type="entry name" value="AA_TRNA_LIGASE_I"/>
    <property type="match status" value="1"/>
</dbReference>
<comment type="catalytic activity">
    <reaction evidence="1">
        <text>tRNA(Lys) + L-lysine + ATP = L-lysyl-tRNA(Lys) + AMP + diphosphate</text>
        <dbReference type="Rhea" id="RHEA:20792"/>
        <dbReference type="Rhea" id="RHEA-COMP:9696"/>
        <dbReference type="Rhea" id="RHEA-COMP:9697"/>
        <dbReference type="ChEBI" id="CHEBI:30616"/>
        <dbReference type="ChEBI" id="CHEBI:32551"/>
        <dbReference type="ChEBI" id="CHEBI:33019"/>
        <dbReference type="ChEBI" id="CHEBI:78442"/>
        <dbReference type="ChEBI" id="CHEBI:78529"/>
        <dbReference type="ChEBI" id="CHEBI:456215"/>
        <dbReference type="EC" id="6.1.1.6"/>
    </reaction>
</comment>
<comment type="subcellular location">
    <subcellularLocation>
        <location evidence="1">Cytoplasm</location>
    </subcellularLocation>
</comment>
<comment type="similarity">
    <text evidence="1">Belongs to the class-I aminoacyl-tRNA synthetase family.</text>
</comment>
<accession>Q4ULZ0</accession>
<gene>
    <name evidence="1" type="primary">lysS</name>
    <name type="ordered locus">RF_0582</name>
</gene>
<proteinExistence type="inferred from homology"/>
<name>SYK_RICFE</name>
<protein>
    <recommendedName>
        <fullName evidence="1">Lysine--tRNA ligase</fullName>
        <ecNumber evidence="1">6.1.1.6</ecNumber>
    </recommendedName>
    <alternativeName>
        <fullName evidence="1">Lysyl-tRNA synthetase</fullName>
        <shortName evidence="1">LysRS</shortName>
    </alternativeName>
</protein>
<evidence type="ECO:0000255" key="1">
    <source>
        <dbReference type="HAMAP-Rule" id="MF_00177"/>
    </source>
</evidence>
<feature type="chain" id="PRO_0000278075" description="Lysine--tRNA ligase">
    <location>
        <begin position="1"/>
        <end position="525"/>
    </location>
</feature>
<feature type="short sequence motif" description="'HIGH' region">
    <location>
        <begin position="44"/>
        <end position="52"/>
    </location>
</feature>
<feature type="short sequence motif" description="'KMSKS' region">
    <location>
        <begin position="290"/>
        <end position="294"/>
    </location>
</feature>
<feature type="binding site" evidence="1">
    <location>
        <position position="293"/>
    </location>
    <ligand>
        <name>ATP</name>
        <dbReference type="ChEBI" id="CHEBI:30616"/>
    </ligand>
</feature>
<organism>
    <name type="scientific">Rickettsia felis (strain ATCC VR-1525 / URRWXCal2)</name>
    <name type="common">Rickettsia azadi</name>
    <dbReference type="NCBI Taxonomy" id="315456"/>
    <lineage>
        <taxon>Bacteria</taxon>
        <taxon>Pseudomonadati</taxon>
        <taxon>Pseudomonadota</taxon>
        <taxon>Alphaproteobacteria</taxon>
        <taxon>Rickettsiales</taxon>
        <taxon>Rickettsiaceae</taxon>
        <taxon>Rickettsieae</taxon>
        <taxon>Rickettsia</taxon>
        <taxon>spotted fever group</taxon>
    </lineage>
</organism>